<accession>A0A223GEB2</accession>
<feature type="chain" id="PRO_0000462487" description="Cross-pathway control WD-repeat protein 2">
    <location>
        <begin position="1"/>
        <end position="315"/>
    </location>
</feature>
<feature type="repeat" description="WD 1" evidence="2">
    <location>
        <begin position="14"/>
        <end position="54"/>
    </location>
</feature>
<feature type="repeat" description="WD 2" evidence="2">
    <location>
        <begin position="62"/>
        <end position="101"/>
    </location>
</feature>
<feature type="repeat" description="WD 3" evidence="2">
    <location>
        <begin position="104"/>
        <end position="144"/>
    </location>
</feature>
<feature type="repeat" description="WD 4" evidence="2">
    <location>
        <begin position="147"/>
        <end position="188"/>
    </location>
</feature>
<feature type="repeat" description="WD 5" evidence="2">
    <location>
        <begin position="191"/>
        <end position="230"/>
    </location>
</feature>
<feature type="repeat" description="WD 6" evidence="2">
    <location>
        <begin position="232"/>
        <end position="270"/>
    </location>
</feature>
<feature type="repeat" description="WD 7" evidence="2">
    <location>
        <begin position="282"/>
        <end position="315"/>
    </location>
</feature>
<proteinExistence type="evidence at transcript level"/>
<dbReference type="EMBL" id="KY815023">
    <property type="protein sequence ID" value="AST24362.1"/>
    <property type="molecule type" value="Genomic_DNA"/>
</dbReference>
<dbReference type="SMR" id="A0A223GEB2"/>
<dbReference type="GO" id="GO:0043022">
    <property type="term" value="F:ribosome binding"/>
    <property type="evidence" value="ECO:0007669"/>
    <property type="project" value="InterPro"/>
</dbReference>
<dbReference type="GO" id="GO:0045182">
    <property type="term" value="F:translation regulator activity"/>
    <property type="evidence" value="ECO:0007669"/>
    <property type="project" value="InterPro"/>
</dbReference>
<dbReference type="CDD" id="cd00200">
    <property type="entry name" value="WD40"/>
    <property type="match status" value="1"/>
</dbReference>
<dbReference type="FunFam" id="2.130.10.10:FF:000018">
    <property type="entry name" value="Receptor for activated C kinase 1"/>
    <property type="match status" value="1"/>
</dbReference>
<dbReference type="Gene3D" id="2.130.10.10">
    <property type="entry name" value="YVTN repeat-like/Quinoprotein amine dehydrogenase"/>
    <property type="match status" value="1"/>
</dbReference>
<dbReference type="InterPro" id="IPR020472">
    <property type="entry name" value="G-protein_beta_WD-40_rep"/>
</dbReference>
<dbReference type="InterPro" id="IPR045223">
    <property type="entry name" value="RACK1-like"/>
</dbReference>
<dbReference type="InterPro" id="IPR015943">
    <property type="entry name" value="WD40/YVTN_repeat-like_dom_sf"/>
</dbReference>
<dbReference type="InterPro" id="IPR019775">
    <property type="entry name" value="WD40_repeat_CS"/>
</dbReference>
<dbReference type="InterPro" id="IPR036322">
    <property type="entry name" value="WD40_repeat_dom_sf"/>
</dbReference>
<dbReference type="InterPro" id="IPR001680">
    <property type="entry name" value="WD40_rpt"/>
</dbReference>
<dbReference type="PANTHER" id="PTHR19868">
    <property type="entry name" value="RECEPTOR FOR ACTIVATED PROTEIN KINASE C RACK1"/>
    <property type="match status" value="1"/>
</dbReference>
<dbReference type="Pfam" id="PF00400">
    <property type="entry name" value="WD40"/>
    <property type="match status" value="7"/>
</dbReference>
<dbReference type="PRINTS" id="PR00320">
    <property type="entry name" value="GPROTEINBRPT"/>
</dbReference>
<dbReference type="SMART" id="SM00320">
    <property type="entry name" value="WD40"/>
    <property type="match status" value="7"/>
</dbReference>
<dbReference type="SUPFAM" id="SSF50978">
    <property type="entry name" value="WD40 repeat-like"/>
    <property type="match status" value="1"/>
</dbReference>
<dbReference type="PROSITE" id="PS00678">
    <property type="entry name" value="WD_REPEATS_1"/>
    <property type="match status" value="3"/>
</dbReference>
<dbReference type="PROSITE" id="PS50082">
    <property type="entry name" value="WD_REPEATS_2"/>
    <property type="match status" value="6"/>
</dbReference>
<dbReference type="PROSITE" id="PS50294">
    <property type="entry name" value="WD_REPEATS_REGION"/>
    <property type="match status" value="6"/>
</dbReference>
<keyword id="KW-0183">Conidiation</keyword>
<keyword id="KW-0677">Repeat</keyword>
<keyword id="KW-0687">Ribonucleoprotein</keyword>
<keyword id="KW-0689">Ribosomal protein</keyword>
<keyword id="KW-0749">Sporulation</keyword>
<keyword id="KW-0853">WD repeat</keyword>
<gene>
    <name evidence="4" type="primary">cpc2</name>
</gene>
<organism>
    <name type="scientific">Flammulina velutipes</name>
    <name type="common">Agaricus velutipes</name>
    <dbReference type="NCBI Taxonomy" id="38945"/>
    <lineage>
        <taxon>Eukaryota</taxon>
        <taxon>Fungi</taxon>
        <taxon>Dikarya</taxon>
        <taxon>Basidiomycota</taxon>
        <taxon>Agaricomycotina</taxon>
        <taxon>Agaricomycetes</taxon>
        <taxon>Agaricomycetidae</taxon>
        <taxon>Agaricales</taxon>
        <taxon>Marasmiineae</taxon>
        <taxon>Physalacriaceae</taxon>
        <taxon>Flammulina</taxon>
    </lineage>
</organism>
<name>CPC2_FLAVE</name>
<sequence>MASDQLRFLGSLEGHKGWVTAIATSQENPDMILTASRDKTIIVWQLTRDEDSYGYPKRILTGHNHFVSDVVISSDGQFALSSSWDHTLRLWDLNTGATTRRFVGHTSDVLSVSFSADNRQIVSGSRDKTIKLWNTLGECKYDIKDECHTEWVSCVRFSPNVSNPVIVSCGWDRVVKVWELSKFKLKTNHYGHTGYINTVSVSPDGSLAASGGKDGITMLWDLNEGKHLYSLEAGDIVNALVFSPNRYWLCAATASCVKIFDLESKSIVDELKPAYTDVQDEGRQPECVSIAWSADGQTLFAGFTDNQLRVWTVTS</sequence>
<evidence type="ECO:0000250" key="1">
    <source>
        <dbReference type="UniProtKB" id="Q01369"/>
    </source>
</evidence>
<evidence type="ECO:0000255" key="2"/>
<evidence type="ECO:0000269" key="3">
    <source>
    </source>
</evidence>
<evidence type="ECO:0000303" key="4">
    <source>
    </source>
</evidence>
<evidence type="ECO:0000305" key="5"/>
<protein>
    <recommendedName>
        <fullName evidence="4">Cross-pathway control WD-repeat protein 2</fullName>
    </recommendedName>
</protein>
<comment type="function">
    <text evidence="1 3">Component of the ribosome, a large ribonucleoprotein complex responsible for the synthesis of proteins in the cell. The small ribosomal subunit (SSU) binds messenger RNAs (mRNAs) and translates the encoded message by selecting cognate aminoacyl-transfer RNA (tRNA) molecules. The large subunit (LSU) contains the ribosomal catalytic site termed the peptidyl transferase center (PTC), which catalyzes the formation of peptide bonds, thereby polymerizing the amino acids delivered by tRNAs into a polypeptide chain. The nascent polypeptides leave the ribosome through a tunnel in the LSU and interact with protein factors that function in enzymatic processing, targeting, and the membrane insertion of nascent chains at the exit of the ribosomal tunnel (By similarity). Plays in important role in the regulation of vegetative growth and fruiting body development (PubMed:32273873). Especially, positively regulates the expression of genes involved in fruiting body development such as FVFD30 and FVFD16, as well as genes encoding for lectins and hydrophobins (PubMed:32273873). Also regulates the expression of genes involved in cAMP signaling pathway (PubMed:32273873).</text>
</comment>
<comment type="developmental stage">
    <text evidence="3">Mostly expressed in primordia.</text>
</comment>
<comment type="disruption phenotype">
    <text evidence="3">Lowers the growth rate and completely impairs fruiting body formation (PubMed:32273873). Lowers transcriptional levels of genes encoding adenylate cyclase and protein kinase A catalytic subunit (PubMed:32273873). Also weakens transcriptional responses to sexual development induction by some genes related to fruiting body development, including 4 jacalin-related lectin encoding genes, 4 hydrophobin encoding genes, and 3 functionally-unknown genes (PubMed:32273873).</text>
</comment>
<comment type="similarity">
    <text evidence="5">Belongs to the WD repeat G protein beta family. Ribosomal protein RACK1 subfamily.</text>
</comment>
<reference key="1">
    <citation type="journal article" date="2020" name="Front. Microbiol.">
        <title>A WD40 Protein Encoding Gene Fvcpc2 Positively Regulates Mushroom Development and Yield in Flammulina velutipes.</title>
        <authorList>
            <person name="Wu T."/>
            <person name="Zhang Z."/>
            <person name="Hu C."/>
            <person name="Zhang L."/>
            <person name="Wei S."/>
            <person name="Li S."/>
        </authorList>
    </citation>
    <scope>NUCLEOTIDE SEQUENCE [GENOMIC DNA]</scope>
    <scope>DEVELOPMENTAL STAGE</scope>
    <scope>FUNCTION</scope>
    <scope>DISRUPTION PHENOTYPE</scope>
</reference>